<dbReference type="EC" id="5.4.2.10" evidence="1"/>
<dbReference type="EMBL" id="AE017262">
    <property type="protein sequence ID" value="AAT04920.1"/>
    <property type="molecule type" value="Genomic_DNA"/>
</dbReference>
<dbReference type="RefSeq" id="WP_003728348.1">
    <property type="nucleotide sequence ID" value="NC_002973.6"/>
</dbReference>
<dbReference type="SMR" id="Q71XP5"/>
<dbReference type="KEGG" id="lmf:LMOf2365_2151"/>
<dbReference type="HOGENOM" id="CLU_016950_7_0_9"/>
<dbReference type="GO" id="GO:0005829">
    <property type="term" value="C:cytosol"/>
    <property type="evidence" value="ECO:0007669"/>
    <property type="project" value="TreeGrafter"/>
</dbReference>
<dbReference type="GO" id="GO:0000287">
    <property type="term" value="F:magnesium ion binding"/>
    <property type="evidence" value="ECO:0007669"/>
    <property type="project" value="UniProtKB-UniRule"/>
</dbReference>
<dbReference type="GO" id="GO:0008966">
    <property type="term" value="F:phosphoglucosamine mutase activity"/>
    <property type="evidence" value="ECO:0007669"/>
    <property type="project" value="UniProtKB-UniRule"/>
</dbReference>
<dbReference type="GO" id="GO:0004615">
    <property type="term" value="F:phosphomannomutase activity"/>
    <property type="evidence" value="ECO:0007669"/>
    <property type="project" value="TreeGrafter"/>
</dbReference>
<dbReference type="GO" id="GO:0005975">
    <property type="term" value="P:carbohydrate metabolic process"/>
    <property type="evidence" value="ECO:0007669"/>
    <property type="project" value="InterPro"/>
</dbReference>
<dbReference type="GO" id="GO:0009252">
    <property type="term" value="P:peptidoglycan biosynthetic process"/>
    <property type="evidence" value="ECO:0007669"/>
    <property type="project" value="TreeGrafter"/>
</dbReference>
<dbReference type="GO" id="GO:0006048">
    <property type="term" value="P:UDP-N-acetylglucosamine biosynthetic process"/>
    <property type="evidence" value="ECO:0007669"/>
    <property type="project" value="TreeGrafter"/>
</dbReference>
<dbReference type="CDD" id="cd05802">
    <property type="entry name" value="GlmM"/>
    <property type="match status" value="1"/>
</dbReference>
<dbReference type="FunFam" id="3.30.310.50:FF:000001">
    <property type="entry name" value="Phosphoglucosamine mutase"/>
    <property type="match status" value="1"/>
</dbReference>
<dbReference type="FunFam" id="3.40.120.10:FF:000001">
    <property type="entry name" value="Phosphoglucosamine mutase"/>
    <property type="match status" value="1"/>
</dbReference>
<dbReference type="FunFam" id="3.40.120.10:FF:000002">
    <property type="entry name" value="Phosphoglucosamine mutase"/>
    <property type="match status" value="1"/>
</dbReference>
<dbReference type="Gene3D" id="3.40.120.10">
    <property type="entry name" value="Alpha-D-Glucose-1,6-Bisphosphate, subunit A, domain 3"/>
    <property type="match status" value="3"/>
</dbReference>
<dbReference type="Gene3D" id="3.30.310.50">
    <property type="entry name" value="Alpha-D-phosphohexomutase, C-terminal domain"/>
    <property type="match status" value="1"/>
</dbReference>
<dbReference type="HAMAP" id="MF_01554_B">
    <property type="entry name" value="GlmM_B"/>
    <property type="match status" value="1"/>
</dbReference>
<dbReference type="InterPro" id="IPR005844">
    <property type="entry name" value="A-D-PHexomutase_a/b/a-I"/>
</dbReference>
<dbReference type="InterPro" id="IPR016055">
    <property type="entry name" value="A-D-PHexomutase_a/b/a-I/II/III"/>
</dbReference>
<dbReference type="InterPro" id="IPR005845">
    <property type="entry name" value="A-D-PHexomutase_a/b/a-II"/>
</dbReference>
<dbReference type="InterPro" id="IPR005846">
    <property type="entry name" value="A-D-PHexomutase_a/b/a-III"/>
</dbReference>
<dbReference type="InterPro" id="IPR005843">
    <property type="entry name" value="A-D-PHexomutase_C"/>
</dbReference>
<dbReference type="InterPro" id="IPR036900">
    <property type="entry name" value="A-D-PHexomutase_C_sf"/>
</dbReference>
<dbReference type="InterPro" id="IPR016066">
    <property type="entry name" value="A-D-PHexomutase_CS"/>
</dbReference>
<dbReference type="InterPro" id="IPR005841">
    <property type="entry name" value="Alpha-D-phosphohexomutase_SF"/>
</dbReference>
<dbReference type="InterPro" id="IPR018247">
    <property type="entry name" value="EF_Hand_1_Ca_BS"/>
</dbReference>
<dbReference type="InterPro" id="IPR006352">
    <property type="entry name" value="GlmM_bact"/>
</dbReference>
<dbReference type="InterPro" id="IPR050060">
    <property type="entry name" value="Phosphoglucosamine_mutase"/>
</dbReference>
<dbReference type="NCBIfam" id="TIGR01455">
    <property type="entry name" value="glmM"/>
    <property type="match status" value="1"/>
</dbReference>
<dbReference type="NCBIfam" id="NF008139">
    <property type="entry name" value="PRK10887.1"/>
    <property type="match status" value="1"/>
</dbReference>
<dbReference type="PANTHER" id="PTHR42946:SF1">
    <property type="entry name" value="PHOSPHOGLUCOMUTASE (ALPHA-D-GLUCOSE-1,6-BISPHOSPHATE-DEPENDENT)"/>
    <property type="match status" value="1"/>
</dbReference>
<dbReference type="PANTHER" id="PTHR42946">
    <property type="entry name" value="PHOSPHOHEXOSE MUTASE"/>
    <property type="match status" value="1"/>
</dbReference>
<dbReference type="Pfam" id="PF02878">
    <property type="entry name" value="PGM_PMM_I"/>
    <property type="match status" value="1"/>
</dbReference>
<dbReference type="Pfam" id="PF02879">
    <property type="entry name" value="PGM_PMM_II"/>
    <property type="match status" value="1"/>
</dbReference>
<dbReference type="Pfam" id="PF02880">
    <property type="entry name" value="PGM_PMM_III"/>
    <property type="match status" value="1"/>
</dbReference>
<dbReference type="Pfam" id="PF00408">
    <property type="entry name" value="PGM_PMM_IV"/>
    <property type="match status" value="1"/>
</dbReference>
<dbReference type="PRINTS" id="PR00509">
    <property type="entry name" value="PGMPMM"/>
</dbReference>
<dbReference type="SUPFAM" id="SSF55957">
    <property type="entry name" value="Phosphoglucomutase, C-terminal domain"/>
    <property type="match status" value="1"/>
</dbReference>
<dbReference type="SUPFAM" id="SSF53738">
    <property type="entry name" value="Phosphoglucomutase, first 3 domains"/>
    <property type="match status" value="3"/>
</dbReference>
<dbReference type="PROSITE" id="PS00710">
    <property type="entry name" value="PGM_PMM"/>
    <property type="match status" value="1"/>
</dbReference>
<evidence type="ECO:0000255" key="1">
    <source>
        <dbReference type="HAMAP-Rule" id="MF_01554"/>
    </source>
</evidence>
<sequence>MGKYFGTDGVRGVANSELTPELAFRLGRMGGYVLTRHVGEHPRVLVARDTRISGEMLESALIAGLVSVGIEVMRLGVISTPGVAYLTKAQGASASVMISASHNPVDDNGIKFFGSDGFKLSDDQEEEIEQLLDTAEDTLPRPSGEGLGTVSDYFEGKQKYIQYLKQTIENDFNGYHIALDCANGATSGLATHLFADLDADISSMGASPNGLNINDGVGSTHPEALAAFVLDKKADVGLAFDGDGDRVIAIDEIGQIVDGDKIMFICAKYLREQGLLNNNTIVSTVMSNLGFYKGLKELEIEDVQTAVGDRYVVEAMREGNYNLGGEQSGHIIFLDHNTTGDGLLSGIQLINVMKATGKKLSELAAEMKTFPQKLENIRVSDKNHVTDNPKVSKVIGEVEAEMAGNGRVLVRPSGTEPLVRVMVEAATKEETDEYCERISAVVRSEMALND</sequence>
<comment type="function">
    <text evidence="1">Catalyzes the conversion of glucosamine-6-phosphate to glucosamine-1-phosphate.</text>
</comment>
<comment type="catalytic activity">
    <reaction evidence="1">
        <text>alpha-D-glucosamine 1-phosphate = D-glucosamine 6-phosphate</text>
        <dbReference type="Rhea" id="RHEA:23424"/>
        <dbReference type="ChEBI" id="CHEBI:58516"/>
        <dbReference type="ChEBI" id="CHEBI:58725"/>
        <dbReference type="EC" id="5.4.2.10"/>
    </reaction>
</comment>
<comment type="cofactor">
    <cofactor evidence="1">
        <name>Mg(2+)</name>
        <dbReference type="ChEBI" id="CHEBI:18420"/>
    </cofactor>
    <text evidence="1">Binds 1 Mg(2+) ion per subunit.</text>
</comment>
<comment type="PTM">
    <text evidence="1">Activated by phosphorylation.</text>
</comment>
<comment type="similarity">
    <text evidence="1">Belongs to the phosphohexose mutase family.</text>
</comment>
<proteinExistence type="inferred from homology"/>
<protein>
    <recommendedName>
        <fullName evidence="1">Phosphoglucosamine mutase</fullName>
        <ecNumber evidence="1">5.4.2.10</ecNumber>
    </recommendedName>
</protein>
<keyword id="KW-0413">Isomerase</keyword>
<keyword id="KW-0460">Magnesium</keyword>
<keyword id="KW-0479">Metal-binding</keyword>
<keyword id="KW-0597">Phosphoprotein</keyword>
<gene>
    <name evidence="1" type="primary">glmM</name>
    <name type="ordered locus">LMOf2365_2151</name>
</gene>
<name>GLMM_LISMF</name>
<accession>Q71XP5</accession>
<organism>
    <name type="scientific">Listeria monocytogenes serotype 4b (strain F2365)</name>
    <dbReference type="NCBI Taxonomy" id="265669"/>
    <lineage>
        <taxon>Bacteria</taxon>
        <taxon>Bacillati</taxon>
        <taxon>Bacillota</taxon>
        <taxon>Bacilli</taxon>
        <taxon>Bacillales</taxon>
        <taxon>Listeriaceae</taxon>
        <taxon>Listeria</taxon>
    </lineage>
</organism>
<feature type="chain" id="PRO_0000147912" description="Phosphoglucosamine mutase">
    <location>
        <begin position="1"/>
        <end position="450"/>
    </location>
</feature>
<feature type="active site" description="Phosphoserine intermediate" evidence="1">
    <location>
        <position position="101"/>
    </location>
</feature>
<feature type="binding site" description="via phosphate group" evidence="1">
    <location>
        <position position="101"/>
    </location>
    <ligand>
        <name>Mg(2+)</name>
        <dbReference type="ChEBI" id="CHEBI:18420"/>
    </ligand>
</feature>
<feature type="binding site" evidence="1">
    <location>
        <position position="241"/>
    </location>
    <ligand>
        <name>Mg(2+)</name>
        <dbReference type="ChEBI" id="CHEBI:18420"/>
    </ligand>
</feature>
<feature type="binding site" evidence="1">
    <location>
        <position position="243"/>
    </location>
    <ligand>
        <name>Mg(2+)</name>
        <dbReference type="ChEBI" id="CHEBI:18420"/>
    </ligand>
</feature>
<feature type="binding site" evidence="1">
    <location>
        <position position="245"/>
    </location>
    <ligand>
        <name>Mg(2+)</name>
        <dbReference type="ChEBI" id="CHEBI:18420"/>
    </ligand>
</feature>
<feature type="modified residue" description="Phosphoserine" evidence="1">
    <location>
        <position position="101"/>
    </location>
</feature>
<reference key="1">
    <citation type="journal article" date="2004" name="Nucleic Acids Res.">
        <title>Whole genome comparisons of serotype 4b and 1/2a strains of the food-borne pathogen Listeria monocytogenes reveal new insights into the core genome components of this species.</title>
        <authorList>
            <person name="Nelson K.E."/>
            <person name="Fouts D.E."/>
            <person name="Mongodin E.F."/>
            <person name="Ravel J."/>
            <person name="DeBoy R.T."/>
            <person name="Kolonay J.F."/>
            <person name="Rasko D.A."/>
            <person name="Angiuoli S.V."/>
            <person name="Gill S.R."/>
            <person name="Paulsen I.T."/>
            <person name="Peterson J.D."/>
            <person name="White O."/>
            <person name="Nelson W.C."/>
            <person name="Nierman W.C."/>
            <person name="Beanan M.J."/>
            <person name="Brinkac L.M."/>
            <person name="Daugherty S.C."/>
            <person name="Dodson R.J."/>
            <person name="Durkin A.S."/>
            <person name="Madupu R."/>
            <person name="Haft D.H."/>
            <person name="Selengut J."/>
            <person name="Van Aken S.E."/>
            <person name="Khouri H.M."/>
            <person name="Fedorova N."/>
            <person name="Forberger H.A."/>
            <person name="Tran B."/>
            <person name="Kathariou S."/>
            <person name="Wonderling L.D."/>
            <person name="Uhlich G.A."/>
            <person name="Bayles D.O."/>
            <person name="Luchansky J.B."/>
            <person name="Fraser C.M."/>
        </authorList>
    </citation>
    <scope>NUCLEOTIDE SEQUENCE [LARGE SCALE GENOMIC DNA]</scope>
    <source>
        <strain>F2365</strain>
    </source>
</reference>